<gene>
    <name evidence="1" type="primary">nifW</name>
    <name type="ordered locus">PST_1355</name>
</gene>
<evidence type="ECO:0000255" key="1">
    <source>
        <dbReference type="HAMAP-Rule" id="MF_00529"/>
    </source>
</evidence>
<name>NIFW_STUS1</name>
<sequence>MSEQAAEPNLDGPLDEALEELVSAEDFLNFFGVPFVPSVVQVNRLHIMQRYHDYLCQAGDIEHLQDAVRYAVYRKLLVRAYEDFVASDAQTEKVFKVFHMHEPQTTFVPIDQLLG</sequence>
<proteinExistence type="inferred from homology"/>
<keyword id="KW-0535">Nitrogen fixation</keyword>
<keyword id="KW-1185">Reference proteome</keyword>
<protein>
    <recommendedName>
        <fullName evidence="1">Nitrogenase-stabilizing/protective protein NifW</fullName>
    </recommendedName>
</protein>
<dbReference type="EMBL" id="CP000304">
    <property type="protein sequence ID" value="ABP79050.1"/>
    <property type="molecule type" value="Genomic_DNA"/>
</dbReference>
<dbReference type="RefSeq" id="WP_011912532.1">
    <property type="nucleotide sequence ID" value="NC_009434.1"/>
</dbReference>
<dbReference type="SMR" id="A4VJ99"/>
<dbReference type="KEGG" id="psa:PST_1355"/>
<dbReference type="eggNOG" id="ENOG50330W8">
    <property type="taxonomic scope" value="Bacteria"/>
</dbReference>
<dbReference type="HOGENOM" id="CLU_145318_0_0_6"/>
<dbReference type="Proteomes" id="UP000000233">
    <property type="component" value="Chromosome"/>
</dbReference>
<dbReference type="GO" id="GO:0009399">
    <property type="term" value="P:nitrogen fixation"/>
    <property type="evidence" value="ECO:0007669"/>
    <property type="project" value="UniProtKB-UniRule"/>
</dbReference>
<dbReference type="HAMAP" id="MF_00529">
    <property type="entry name" value="NifW"/>
    <property type="match status" value="1"/>
</dbReference>
<dbReference type="InterPro" id="IPR004893">
    <property type="entry name" value="NifW"/>
</dbReference>
<dbReference type="Pfam" id="PF03206">
    <property type="entry name" value="NifW"/>
    <property type="match status" value="1"/>
</dbReference>
<dbReference type="PIRSF" id="PIRSF005790">
    <property type="entry name" value="NifW"/>
    <property type="match status" value="1"/>
</dbReference>
<organism>
    <name type="scientific">Stutzerimonas stutzeri (strain A1501)</name>
    <name type="common">Pseudomonas stutzeri</name>
    <dbReference type="NCBI Taxonomy" id="379731"/>
    <lineage>
        <taxon>Bacteria</taxon>
        <taxon>Pseudomonadati</taxon>
        <taxon>Pseudomonadota</taxon>
        <taxon>Gammaproteobacteria</taxon>
        <taxon>Pseudomonadales</taxon>
        <taxon>Pseudomonadaceae</taxon>
        <taxon>Stutzerimonas</taxon>
    </lineage>
</organism>
<reference key="1">
    <citation type="journal article" date="2008" name="Proc. Natl. Acad. Sci. U.S.A.">
        <title>Nitrogen fixation island and rhizosphere competence traits in the genome of root-associated Pseudomonas stutzeri A1501.</title>
        <authorList>
            <person name="Yan Y."/>
            <person name="Yang J."/>
            <person name="Dou Y."/>
            <person name="Chen M."/>
            <person name="Ping S."/>
            <person name="Peng J."/>
            <person name="Lu W."/>
            <person name="Zhang W."/>
            <person name="Yao Z."/>
            <person name="Li H."/>
            <person name="Liu W."/>
            <person name="He S."/>
            <person name="Geng L."/>
            <person name="Zhang X."/>
            <person name="Yang F."/>
            <person name="Yu H."/>
            <person name="Zhan Y."/>
            <person name="Li D."/>
            <person name="Lin Z."/>
            <person name="Wang Y."/>
            <person name="Elmerich C."/>
            <person name="Lin M."/>
            <person name="Jin Q."/>
        </authorList>
    </citation>
    <scope>NUCLEOTIDE SEQUENCE [LARGE SCALE GENOMIC DNA]</scope>
    <source>
        <strain>A1501</strain>
    </source>
</reference>
<comment type="function">
    <text evidence="1">May protect the nitrogenase Fe-Mo protein from oxidative damage.</text>
</comment>
<comment type="subunit">
    <text evidence="1">Homotrimer; associates with NifD.</text>
</comment>
<comment type="similarity">
    <text evidence="1">Belongs to the NifW family.</text>
</comment>
<accession>A4VJ99</accession>
<feature type="chain" id="PRO_1000060970" description="Nitrogenase-stabilizing/protective protein NifW">
    <location>
        <begin position="1"/>
        <end position="115"/>
    </location>
</feature>